<evidence type="ECO:0000255" key="1">
    <source>
        <dbReference type="HAMAP-Rule" id="MF_00108"/>
    </source>
</evidence>
<name>ISPD_AERHH</name>
<accession>A0KGH5</accession>
<organism>
    <name type="scientific">Aeromonas hydrophila subsp. hydrophila (strain ATCC 7966 / DSM 30187 / BCRC 13018 / CCUG 14551 / JCM 1027 / KCTC 2358 / NCIMB 9240 / NCTC 8049)</name>
    <dbReference type="NCBI Taxonomy" id="380703"/>
    <lineage>
        <taxon>Bacteria</taxon>
        <taxon>Pseudomonadati</taxon>
        <taxon>Pseudomonadota</taxon>
        <taxon>Gammaproteobacteria</taxon>
        <taxon>Aeromonadales</taxon>
        <taxon>Aeromonadaceae</taxon>
        <taxon>Aeromonas</taxon>
    </lineage>
</organism>
<protein>
    <recommendedName>
        <fullName evidence="1">2-C-methyl-D-erythritol 4-phosphate cytidylyltransferase</fullName>
        <ecNumber evidence="1">2.7.7.60</ecNumber>
    </recommendedName>
    <alternativeName>
        <fullName evidence="1">4-diphosphocytidyl-2C-methyl-D-erythritol synthase</fullName>
    </alternativeName>
    <alternativeName>
        <fullName evidence="1">MEP cytidylyltransferase</fullName>
        <shortName evidence="1">MCT</shortName>
    </alternativeName>
</protein>
<dbReference type="EC" id="2.7.7.60" evidence="1"/>
<dbReference type="EMBL" id="CP000462">
    <property type="protein sequence ID" value="ABK37012.1"/>
    <property type="molecule type" value="Genomic_DNA"/>
</dbReference>
<dbReference type="RefSeq" id="WP_011704771.1">
    <property type="nucleotide sequence ID" value="NC_008570.1"/>
</dbReference>
<dbReference type="RefSeq" id="YP_855366.1">
    <property type="nucleotide sequence ID" value="NC_008570.1"/>
</dbReference>
<dbReference type="SMR" id="A0KGH5"/>
<dbReference type="STRING" id="380703.AHA_0823"/>
<dbReference type="EnsemblBacteria" id="ABK37012">
    <property type="protein sequence ID" value="ABK37012"/>
    <property type="gene ID" value="AHA_0823"/>
</dbReference>
<dbReference type="GeneID" id="4489303"/>
<dbReference type="KEGG" id="aha:AHA_0823"/>
<dbReference type="PATRIC" id="fig|380703.7.peg.823"/>
<dbReference type="eggNOG" id="COG1211">
    <property type="taxonomic scope" value="Bacteria"/>
</dbReference>
<dbReference type="HOGENOM" id="CLU_061281_3_1_6"/>
<dbReference type="OrthoDB" id="9806837at2"/>
<dbReference type="UniPathway" id="UPA00056">
    <property type="reaction ID" value="UER00093"/>
</dbReference>
<dbReference type="Proteomes" id="UP000000756">
    <property type="component" value="Chromosome"/>
</dbReference>
<dbReference type="GO" id="GO:0050518">
    <property type="term" value="F:2-C-methyl-D-erythritol 4-phosphate cytidylyltransferase activity"/>
    <property type="evidence" value="ECO:0007669"/>
    <property type="project" value="UniProtKB-UniRule"/>
</dbReference>
<dbReference type="GO" id="GO:0019288">
    <property type="term" value="P:isopentenyl diphosphate biosynthetic process, methylerythritol 4-phosphate pathway"/>
    <property type="evidence" value="ECO:0007669"/>
    <property type="project" value="UniProtKB-UniRule"/>
</dbReference>
<dbReference type="CDD" id="cd02516">
    <property type="entry name" value="CDP-ME_synthetase"/>
    <property type="match status" value="1"/>
</dbReference>
<dbReference type="FunFam" id="3.90.550.10:FF:000003">
    <property type="entry name" value="2-C-methyl-D-erythritol 4-phosphate cytidylyltransferase"/>
    <property type="match status" value="1"/>
</dbReference>
<dbReference type="Gene3D" id="3.90.550.10">
    <property type="entry name" value="Spore Coat Polysaccharide Biosynthesis Protein SpsA, Chain A"/>
    <property type="match status" value="1"/>
</dbReference>
<dbReference type="HAMAP" id="MF_00108">
    <property type="entry name" value="IspD"/>
    <property type="match status" value="1"/>
</dbReference>
<dbReference type="InterPro" id="IPR001228">
    <property type="entry name" value="IspD"/>
</dbReference>
<dbReference type="InterPro" id="IPR034683">
    <property type="entry name" value="IspD/TarI"/>
</dbReference>
<dbReference type="InterPro" id="IPR050088">
    <property type="entry name" value="IspD/TarI_cytidylyltransf_bact"/>
</dbReference>
<dbReference type="InterPro" id="IPR018294">
    <property type="entry name" value="ISPD_synthase_CS"/>
</dbReference>
<dbReference type="InterPro" id="IPR029044">
    <property type="entry name" value="Nucleotide-diphossugar_trans"/>
</dbReference>
<dbReference type="NCBIfam" id="TIGR00453">
    <property type="entry name" value="ispD"/>
    <property type="match status" value="1"/>
</dbReference>
<dbReference type="PANTHER" id="PTHR32125">
    <property type="entry name" value="2-C-METHYL-D-ERYTHRITOL 4-PHOSPHATE CYTIDYLYLTRANSFERASE, CHLOROPLASTIC"/>
    <property type="match status" value="1"/>
</dbReference>
<dbReference type="PANTHER" id="PTHR32125:SF4">
    <property type="entry name" value="2-C-METHYL-D-ERYTHRITOL 4-PHOSPHATE CYTIDYLYLTRANSFERASE, CHLOROPLASTIC"/>
    <property type="match status" value="1"/>
</dbReference>
<dbReference type="Pfam" id="PF01128">
    <property type="entry name" value="IspD"/>
    <property type="match status" value="1"/>
</dbReference>
<dbReference type="SUPFAM" id="SSF53448">
    <property type="entry name" value="Nucleotide-diphospho-sugar transferases"/>
    <property type="match status" value="1"/>
</dbReference>
<dbReference type="PROSITE" id="PS01295">
    <property type="entry name" value="ISPD"/>
    <property type="match status" value="1"/>
</dbReference>
<feature type="chain" id="PRO_1000071318" description="2-C-methyl-D-erythritol 4-phosphate cytidylyltransferase">
    <location>
        <begin position="1"/>
        <end position="243"/>
    </location>
</feature>
<feature type="site" description="Transition state stabilizer" evidence="1">
    <location>
        <position position="20"/>
    </location>
</feature>
<feature type="site" description="Transition state stabilizer" evidence="1">
    <location>
        <position position="27"/>
    </location>
</feature>
<feature type="site" description="Positions MEP for the nucleophilic attack" evidence="1">
    <location>
        <position position="154"/>
    </location>
</feature>
<feature type="site" description="Positions MEP for the nucleophilic attack" evidence="1">
    <location>
        <position position="210"/>
    </location>
</feature>
<keyword id="KW-0414">Isoprene biosynthesis</keyword>
<keyword id="KW-0548">Nucleotidyltransferase</keyword>
<keyword id="KW-1185">Reference proteome</keyword>
<keyword id="KW-0808">Transferase</keyword>
<comment type="function">
    <text evidence="1">Catalyzes the formation of 4-diphosphocytidyl-2-C-methyl-D-erythritol from CTP and 2-C-methyl-D-erythritol 4-phosphate (MEP).</text>
</comment>
<comment type="catalytic activity">
    <reaction evidence="1">
        <text>2-C-methyl-D-erythritol 4-phosphate + CTP + H(+) = 4-CDP-2-C-methyl-D-erythritol + diphosphate</text>
        <dbReference type="Rhea" id="RHEA:13429"/>
        <dbReference type="ChEBI" id="CHEBI:15378"/>
        <dbReference type="ChEBI" id="CHEBI:33019"/>
        <dbReference type="ChEBI" id="CHEBI:37563"/>
        <dbReference type="ChEBI" id="CHEBI:57823"/>
        <dbReference type="ChEBI" id="CHEBI:58262"/>
        <dbReference type="EC" id="2.7.7.60"/>
    </reaction>
</comment>
<comment type="pathway">
    <text evidence="1">Isoprenoid biosynthesis; isopentenyl diphosphate biosynthesis via DXP pathway; isopentenyl diphosphate from 1-deoxy-D-xylulose 5-phosphate: step 2/6.</text>
</comment>
<comment type="similarity">
    <text evidence="1">Belongs to the IspD/TarI cytidylyltransferase family. IspD subfamily.</text>
</comment>
<proteinExistence type="inferred from homology"/>
<gene>
    <name evidence="1" type="primary">ispD</name>
    <name type="ordered locus">AHA_0823</name>
</gene>
<reference key="1">
    <citation type="journal article" date="2006" name="J. Bacteriol.">
        <title>Genome sequence of Aeromonas hydrophila ATCC 7966T: jack of all trades.</title>
        <authorList>
            <person name="Seshadri R."/>
            <person name="Joseph S.W."/>
            <person name="Chopra A.K."/>
            <person name="Sha J."/>
            <person name="Shaw J."/>
            <person name="Graf J."/>
            <person name="Haft D.H."/>
            <person name="Wu M."/>
            <person name="Ren Q."/>
            <person name="Rosovitz M.J."/>
            <person name="Madupu R."/>
            <person name="Tallon L."/>
            <person name="Kim M."/>
            <person name="Jin S."/>
            <person name="Vuong H."/>
            <person name="Stine O.C."/>
            <person name="Ali A."/>
            <person name="Horneman A.J."/>
            <person name="Heidelberg J.F."/>
        </authorList>
    </citation>
    <scope>NUCLEOTIDE SEQUENCE [LARGE SCALE GENOMIC DNA]</scope>
    <source>
        <strain>ATCC 7966 / DSM 30187 / BCRC 13018 / CCUG 14551 / JCM 1027 / KCTC 2358 / NCIMB 9240 / NCTC 8049</strain>
    </source>
</reference>
<sequence>MTDLRPGLTAIVPAAGIGSRMGAECPKQYLQLAGRTILEHTLTRLLSHPAIAQVIVALAPHDRWFDTLAVAADPRILRVEGGAERAFSVLNALHVAAGEWVLVHDAARPCLTHGDLDALIATAMACDGAILGSRVRDTMKRSDGAGNILATVDREQLWHALTPQMFPTRPLRRALEEGLALGATITDEASAMERAGFTVRMVEGRADNIKVTRPEDLSLAGLYLQQQNARQPAQPDSPTEELA</sequence>